<comment type="function">
    <text evidence="1">Catalyzes the methylthiolation of N6-threonylcarbamoyladenosine (t(6)A), leading to the formation of 2-methylthio-N6-threonylcarbamoyladenosine (ms(2)t(6)A) at position 37 in tRNAs that read codons beginning with adenine.</text>
</comment>
<comment type="catalytic activity">
    <reaction evidence="1">
        <text>N(6)-L-threonylcarbamoyladenosine(37) in tRNA + (sulfur carrier)-SH + AH2 + 2 S-adenosyl-L-methionine = 2-methylsulfanyl-N(6)-L-threonylcarbamoyladenosine(37) in tRNA + (sulfur carrier)-H + 5'-deoxyadenosine + L-methionine + A + S-adenosyl-L-homocysteine + 2 H(+)</text>
        <dbReference type="Rhea" id="RHEA:37075"/>
        <dbReference type="Rhea" id="RHEA-COMP:10163"/>
        <dbReference type="Rhea" id="RHEA-COMP:11092"/>
        <dbReference type="Rhea" id="RHEA-COMP:14737"/>
        <dbReference type="Rhea" id="RHEA-COMP:14739"/>
        <dbReference type="ChEBI" id="CHEBI:13193"/>
        <dbReference type="ChEBI" id="CHEBI:15378"/>
        <dbReference type="ChEBI" id="CHEBI:17319"/>
        <dbReference type="ChEBI" id="CHEBI:17499"/>
        <dbReference type="ChEBI" id="CHEBI:29917"/>
        <dbReference type="ChEBI" id="CHEBI:57844"/>
        <dbReference type="ChEBI" id="CHEBI:57856"/>
        <dbReference type="ChEBI" id="CHEBI:59789"/>
        <dbReference type="ChEBI" id="CHEBI:64428"/>
        <dbReference type="ChEBI" id="CHEBI:74418"/>
        <dbReference type="ChEBI" id="CHEBI:74420"/>
        <dbReference type="EC" id="2.8.4.5"/>
    </reaction>
</comment>
<comment type="cofactor">
    <cofactor evidence="2">
        <name>[4Fe-4S] cluster</name>
        <dbReference type="ChEBI" id="CHEBI:49883"/>
    </cofactor>
    <text evidence="2">Binds 2 [4Fe-4S] clusters. One cluster is coordinated with 3 cysteines and an exchangeable S-adenosyl-L-methionine.</text>
</comment>
<comment type="subcellular location">
    <subcellularLocation>
        <location evidence="2">Cytoplasm</location>
    </subcellularLocation>
</comment>
<comment type="similarity">
    <text evidence="4">Belongs to the methylthiotransferase family. MtaB subfamily.</text>
</comment>
<feature type="chain" id="PRO_0000141750" description="Threonylcarbamoyladenosine tRNA methylthiotransferase MtaB">
    <location>
        <begin position="1"/>
        <end position="421"/>
    </location>
</feature>
<feature type="domain" description="MTTase N-terminal" evidence="2">
    <location>
        <begin position="10"/>
        <end position="112"/>
    </location>
</feature>
<feature type="domain" description="Radical SAM core" evidence="3">
    <location>
        <begin position="134"/>
        <end position="364"/>
    </location>
</feature>
<feature type="binding site" evidence="2">
    <location>
        <position position="19"/>
    </location>
    <ligand>
        <name>[4Fe-4S] cluster</name>
        <dbReference type="ChEBI" id="CHEBI:49883"/>
        <label>1</label>
    </ligand>
</feature>
<feature type="binding site" evidence="2">
    <location>
        <position position="47"/>
    </location>
    <ligand>
        <name>[4Fe-4S] cluster</name>
        <dbReference type="ChEBI" id="CHEBI:49883"/>
        <label>1</label>
    </ligand>
</feature>
<feature type="binding site" evidence="2">
    <location>
        <position position="78"/>
    </location>
    <ligand>
        <name>[4Fe-4S] cluster</name>
        <dbReference type="ChEBI" id="CHEBI:49883"/>
        <label>1</label>
    </ligand>
</feature>
<feature type="binding site" evidence="2">
    <location>
        <position position="148"/>
    </location>
    <ligand>
        <name>[4Fe-4S] cluster</name>
        <dbReference type="ChEBI" id="CHEBI:49883"/>
        <label>2</label>
        <note>4Fe-4S-S-AdoMet</note>
    </ligand>
</feature>
<feature type="binding site" evidence="2">
    <location>
        <position position="152"/>
    </location>
    <ligand>
        <name>[4Fe-4S] cluster</name>
        <dbReference type="ChEBI" id="CHEBI:49883"/>
        <label>2</label>
        <note>4Fe-4S-S-AdoMet</note>
    </ligand>
</feature>
<feature type="binding site" evidence="2">
    <location>
        <position position="155"/>
    </location>
    <ligand>
        <name>[4Fe-4S] cluster</name>
        <dbReference type="ChEBI" id="CHEBI:49883"/>
        <label>2</label>
        <note>4Fe-4S-S-AdoMet</note>
    </ligand>
</feature>
<name>MTAB_RICPR</name>
<protein>
    <recommendedName>
        <fullName>Threonylcarbamoyladenosine tRNA methylthiotransferase MtaB</fullName>
        <ecNumber>2.8.4.5</ecNumber>
    </recommendedName>
    <alternativeName>
        <fullName>tRNA-t(6)A37 methylthiotransferase</fullName>
    </alternativeName>
</protein>
<dbReference type="EC" id="2.8.4.5"/>
<dbReference type="EMBL" id="AJ235271">
    <property type="protein sequence ID" value="CAA14873.1"/>
    <property type="molecule type" value="Genomic_DNA"/>
</dbReference>
<dbReference type="PIR" id="G71699">
    <property type="entry name" value="G71699"/>
</dbReference>
<dbReference type="RefSeq" id="NP_220797.1">
    <property type="nucleotide sequence ID" value="NC_000963.1"/>
</dbReference>
<dbReference type="RefSeq" id="WP_010886290.1">
    <property type="nucleotide sequence ID" value="NC_000963.1"/>
</dbReference>
<dbReference type="SMR" id="Q9ZDB6"/>
<dbReference type="STRING" id="272947.gene:17555496"/>
<dbReference type="EnsemblBacteria" id="CAA14873">
    <property type="protein sequence ID" value="CAA14873"/>
    <property type="gene ID" value="CAA14873"/>
</dbReference>
<dbReference type="GeneID" id="57569541"/>
<dbReference type="KEGG" id="rpr:RP416"/>
<dbReference type="PATRIC" id="fig|272947.5.peg.429"/>
<dbReference type="eggNOG" id="COG0621">
    <property type="taxonomic scope" value="Bacteria"/>
</dbReference>
<dbReference type="HOGENOM" id="CLU_018697_1_1_5"/>
<dbReference type="OrthoDB" id="9805215at2"/>
<dbReference type="Proteomes" id="UP000002480">
    <property type="component" value="Chromosome"/>
</dbReference>
<dbReference type="GO" id="GO:0005737">
    <property type="term" value="C:cytoplasm"/>
    <property type="evidence" value="ECO:0007669"/>
    <property type="project" value="UniProtKB-SubCell"/>
</dbReference>
<dbReference type="GO" id="GO:0051539">
    <property type="term" value="F:4 iron, 4 sulfur cluster binding"/>
    <property type="evidence" value="ECO:0007669"/>
    <property type="project" value="UniProtKB-KW"/>
</dbReference>
<dbReference type="GO" id="GO:0046872">
    <property type="term" value="F:metal ion binding"/>
    <property type="evidence" value="ECO:0007669"/>
    <property type="project" value="UniProtKB-KW"/>
</dbReference>
<dbReference type="GO" id="GO:0035598">
    <property type="term" value="F:N6-threonylcarbomyladenosine methylthiotransferase activity"/>
    <property type="evidence" value="ECO:0007669"/>
    <property type="project" value="TreeGrafter"/>
</dbReference>
<dbReference type="GO" id="GO:0061712">
    <property type="term" value="F:tRNA (N(6)-L-threonylcarbamoyladenosine(37)-C(2))-methylthiotransferase"/>
    <property type="evidence" value="ECO:0007669"/>
    <property type="project" value="UniProtKB-EC"/>
</dbReference>
<dbReference type="CDD" id="cd01335">
    <property type="entry name" value="Radical_SAM"/>
    <property type="match status" value="1"/>
</dbReference>
<dbReference type="FunFam" id="3.80.30.20:FF:000001">
    <property type="entry name" value="tRNA-2-methylthio-N(6)-dimethylallyladenosine synthase 2"/>
    <property type="match status" value="1"/>
</dbReference>
<dbReference type="Gene3D" id="3.40.50.12160">
    <property type="entry name" value="Methylthiotransferase, N-terminal domain"/>
    <property type="match status" value="1"/>
</dbReference>
<dbReference type="Gene3D" id="3.80.30.20">
    <property type="entry name" value="tm_1862 like domain"/>
    <property type="match status" value="1"/>
</dbReference>
<dbReference type="InterPro" id="IPR006638">
    <property type="entry name" value="Elp3/MiaA/NifB-like_rSAM"/>
</dbReference>
<dbReference type="InterPro" id="IPR005839">
    <property type="entry name" value="Methylthiotransferase"/>
</dbReference>
<dbReference type="InterPro" id="IPR020612">
    <property type="entry name" value="Methylthiotransferase_CS"/>
</dbReference>
<dbReference type="InterPro" id="IPR013848">
    <property type="entry name" value="Methylthiotransferase_N"/>
</dbReference>
<dbReference type="InterPro" id="IPR038135">
    <property type="entry name" value="Methylthiotransferase_N_sf"/>
</dbReference>
<dbReference type="InterPro" id="IPR006467">
    <property type="entry name" value="MiaB-like_bact"/>
</dbReference>
<dbReference type="InterPro" id="IPR007197">
    <property type="entry name" value="rSAM"/>
</dbReference>
<dbReference type="InterPro" id="IPR023404">
    <property type="entry name" value="rSAM_horseshoe"/>
</dbReference>
<dbReference type="NCBIfam" id="TIGR01579">
    <property type="entry name" value="MiaB-like-C"/>
    <property type="match status" value="1"/>
</dbReference>
<dbReference type="NCBIfam" id="TIGR00089">
    <property type="entry name" value="MiaB/RimO family radical SAM methylthiotransferase"/>
    <property type="match status" value="1"/>
</dbReference>
<dbReference type="PANTHER" id="PTHR11918">
    <property type="entry name" value="RADICAL SAM PROTEINS"/>
    <property type="match status" value="1"/>
</dbReference>
<dbReference type="PANTHER" id="PTHR11918:SF45">
    <property type="entry name" value="THREONYLCARBAMOYLADENOSINE TRNA METHYLTHIOTRANSFERASE"/>
    <property type="match status" value="1"/>
</dbReference>
<dbReference type="Pfam" id="PF04055">
    <property type="entry name" value="Radical_SAM"/>
    <property type="match status" value="1"/>
</dbReference>
<dbReference type="Pfam" id="PF00919">
    <property type="entry name" value="UPF0004"/>
    <property type="match status" value="1"/>
</dbReference>
<dbReference type="SFLD" id="SFLDG01082">
    <property type="entry name" value="B12-binding_domain_containing"/>
    <property type="match status" value="1"/>
</dbReference>
<dbReference type="SFLD" id="SFLDG01061">
    <property type="entry name" value="methylthiotransferase"/>
    <property type="match status" value="1"/>
</dbReference>
<dbReference type="SFLD" id="SFLDS00029">
    <property type="entry name" value="Radical_SAM"/>
    <property type="match status" value="1"/>
</dbReference>
<dbReference type="SMART" id="SM00729">
    <property type="entry name" value="Elp3"/>
    <property type="match status" value="1"/>
</dbReference>
<dbReference type="SUPFAM" id="SSF102114">
    <property type="entry name" value="Radical SAM enzymes"/>
    <property type="match status" value="1"/>
</dbReference>
<dbReference type="PROSITE" id="PS51449">
    <property type="entry name" value="MTTASE_N"/>
    <property type="match status" value="1"/>
</dbReference>
<dbReference type="PROSITE" id="PS01278">
    <property type="entry name" value="MTTASE_RADICAL"/>
    <property type="match status" value="1"/>
</dbReference>
<dbReference type="PROSITE" id="PS51918">
    <property type="entry name" value="RADICAL_SAM"/>
    <property type="match status" value="1"/>
</dbReference>
<sequence>MENIIMRNNLRQEIVTFGCRLNIYESEIIRKNLELSGLDNVAIFNTCAVTKSAEKQARQAIRKAKKNNPDLKIIVTGCSAQANPKMYGNMSEVDKVIGNEEKLLSHYYQITDQKISVNDIMSVKETACHLVSSFDGKSRAFIQVQNGCDHNCTFCIIPYVRGKSRSIPIGTIVAQVKHLVLKGFKEVVITGVDVTAYGSDLPGSPTFAQMIKRVLKLVPELKRMRLSSIDIAEIDDELFELIAYSERIMPHFHISVQSGDDMILKRMKRRHNRASVIEFCQKLRAIRPEVSFGADIIAGFPTETNEMFENTRKLILEAELQYLHVFPYSEREGTPAARMPQVPQNIRKERAKILRQDGFNQLNEFFKRHIGQKVELLIENNNIAHTENFIPVKLDKYLAIGQIFKAELVGIEEGYMKCVLV</sequence>
<keyword id="KW-0004">4Fe-4S</keyword>
<keyword id="KW-0963">Cytoplasm</keyword>
<keyword id="KW-0408">Iron</keyword>
<keyword id="KW-0411">Iron-sulfur</keyword>
<keyword id="KW-0479">Metal-binding</keyword>
<keyword id="KW-1185">Reference proteome</keyword>
<keyword id="KW-0949">S-adenosyl-L-methionine</keyword>
<keyword id="KW-0808">Transferase</keyword>
<keyword id="KW-0819">tRNA processing</keyword>
<gene>
    <name type="primary">mtaB</name>
    <name type="ordered locus">RP416</name>
</gene>
<reference key="1">
    <citation type="journal article" date="1998" name="Nature">
        <title>The genome sequence of Rickettsia prowazekii and the origin of mitochondria.</title>
        <authorList>
            <person name="Andersson S.G.E."/>
            <person name="Zomorodipour A."/>
            <person name="Andersson J.O."/>
            <person name="Sicheritz-Ponten T."/>
            <person name="Alsmark U.C.M."/>
            <person name="Podowski R.M."/>
            <person name="Naeslund A.K."/>
            <person name="Eriksson A.-S."/>
            <person name="Winkler H.H."/>
            <person name="Kurland C.G."/>
        </authorList>
    </citation>
    <scope>NUCLEOTIDE SEQUENCE [LARGE SCALE GENOMIC DNA]</scope>
    <source>
        <strain>Madrid E</strain>
    </source>
</reference>
<organism>
    <name type="scientific">Rickettsia prowazekii (strain Madrid E)</name>
    <dbReference type="NCBI Taxonomy" id="272947"/>
    <lineage>
        <taxon>Bacteria</taxon>
        <taxon>Pseudomonadati</taxon>
        <taxon>Pseudomonadota</taxon>
        <taxon>Alphaproteobacteria</taxon>
        <taxon>Rickettsiales</taxon>
        <taxon>Rickettsiaceae</taxon>
        <taxon>Rickettsieae</taxon>
        <taxon>Rickettsia</taxon>
        <taxon>typhus group</taxon>
    </lineage>
</organism>
<proteinExistence type="inferred from homology"/>
<evidence type="ECO:0000250" key="1">
    <source>
        <dbReference type="UniProtKB" id="P54462"/>
    </source>
</evidence>
<evidence type="ECO:0000255" key="2">
    <source>
        <dbReference type="PROSITE-ProRule" id="PRU00780"/>
    </source>
</evidence>
<evidence type="ECO:0000255" key="3">
    <source>
        <dbReference type="PROSITE-ProRule" id="PRU01266"/>
    </source>
</evidence>
<evidence type="ECO:0000305" key="4"/>
<accession>Q9ZDB6</accession>